<organism>
    <name type="scientific">Arabidopsis thaliana</name>
    <name type="common">Mouse-ear cress</name>
    <dbReference type="NCBI Taxonomy" id="3702"/>
    <lineage>
        <taxon>Eukaryota</taxon>
        <taxon>Viridiplantae</taxon>
        <taxon>Streptophyta</taxon>
        <taxon>Embryophyta</taxon>
        <taxon>Tracheophyta</taxon>
        <taxon>Spermatophyta</taxon>
        <taxon>Magnoliopsida</taxon>
        <taxon>eudicotyledons</taxon>
        <taxon>Gunneridae</taxon>
        <taxon>Pentapetalae</taxon>
        <taxon>rosids</taxon>
        <taxon>malvids</taxon>
        <taxon>Brassicales</taxon>
        <taxon>Brassicaceae</taxon>
        <taxon>Camelineae</taxon>
        <taxon>Arabidopsis</taxon>
    </lineage>
</organism>
<dbReference type="EC" id="1.14.-.-"/>
<dbReference type="EMBL" id="AL049659">
    <property type="protein sequence ID" value="CAB41167.1"/>
    <property type="molecule type" value="Genomic_DNA"/>
</dbReference>
<dbReference type="EMBL" id="CP002686">
    <property type="protein sequence ID" value="AEE78399.1"/>
    <property type="molecule type" value="Genomic_DNA"/>
</dbReference>
<dbReference type="EMBL" id="AY096499">
    <property type="protein sequence ID" value="AAM20137.1"/>
    <property type="molecule type" value="mRNA"/>
</dbReference>
<dbReference type="EMBL" id="AY133854">
    <property type="protein sequence ID" value="AAM91788.1"/>
    <property type="molecule type" value="mRNA"/>
</dbReference>
<dbReference type="PIR" id="T06711">
    <property type="entry name" value="T06711"/>
</dbReference>
<dbReference type="RefSeq" id="NP_680110.1">
    <property type="nucleotide sequence ID" value="NM_148857.3"/>
</dbReference>
<dbReference type="SMR" id="Q9STL1"/>
<dbReference type="FunCoup" id="Q9STL1">
    <property type="interactions" value="619"/>
</dbReference>
<dbReference type="STRING" id="3702.Q9STL1"/>
<dbReference type="PaxDb" id="3702-AT3G48310.1"/>
<dbReference type="ProteomicsDB" id="222828"/>
<dbReference type="EnsemblPlants" id="AT3G48310.1">
    <property type="protein sequence ID" value="AT3G48310.1"/>
    <property type="gene ID" value="AT3G48310"/>
</dbReference>
<dbReference type="GeneID" id="823989"/>
<dbReference type="Gramene" id="AT3G48310.1">
    <property type="protein sequence ID" value="AT3G48310.1"/>
    <property type="gene ID" value="AT3G48310"/>
</dbReference>
<dbReference type="KEGG" id="ath:AT3G48310"/>
<dbReference type="Araport" id="AT3G48310"/>
<dbReference type="TAIR" id="AT3G48310">
    <property type="gene designation" value="CYP71A22"/>
</dbReference>
<dbReference type="eggNOG" id="KOG0156">
    <property type="taxonomic scope" value="Eukaryota"/>
</dbReference>
<dbReference type="HOGENOM" id="CLU_001570_4_1_1"/>
<dbReference type="InParanoid" id="Q9STL1"/>
<dbReference type="OMA" id="DNDAGMR"/>
<dbReference type="PhylomeDB" id="Q9STL1"/>
<dbReference type="BioCyc" id="ARA:AT3G48310-MONOMER"/>
<dbReference type="PRO" id="PR:Q9STL1"/>
<dbReference type="Proteomes" id="UP000006548">
    <property type="component" value="Chromosome 3"/>
</dbReference>
<dbReference type="ExpressionAtlas" id="Q9STL1">
    <property type="expression patterns" value="baseline and differential"/>
</dbReference>
<dbReference type="GO" id="GO:0016020">
    <property type="term" value="C:membrane"/>
    <property type="evidence" value="ECO:0007669"/>
    <property type="project" value="UniProtKB-SubCell"/>
</dbReference>
<dbReference type="GO" id="GO:0020037">
    <property type="term" value="F:heme binding"/>
    <property type="evidence" value="ECO:0007669"/>
    <property type="project" value="InterPro"/>
</dbReference>
<dbReference type="GO" id="GO:0005506">
    <property type="term" value="F:iron ion binding"/>
    <property type="evidence" value="ECO:0007669"/>
    <property type="project" value="InterPro"/>
</dbReference>
<dbReference type="GO" id="GO:0004497">
    <property type="term" value="F:monooxygenase activity"/>
    <property type="evidence" value="ECO:0007669"/>
    <property type="project" value="UniProtKB-KW"/>
</dbReference>
<dbReference type="GO" id="GO:0016705">
    <property type="term" value="F:oxidoreductase activity, acting on paired donors, with incorporation or reduction of molecular oxygen"/>
    <property type="evidence" value="ECO:0007669"/>
    <property type="project" value="InterPro"/>
</dbReference>
<dbReference type="CDD" id="cd11072">
    <property type="entry name" value="CYP71-like"/>
    <property type="match status" value="1"/>
</dbReference>
<dbReference type="FunFam" id="1.10.630.10:FF:000011">
    <property type="entry name" value="Cytochrome P450 83B1"/>
    <property type="match status" value="1"/>
</dbReference>
<dbReference type="Gene3D" id="1.10.630.10">
    <property type="entry name" value="Cytochrome P450"/>
    <property type="match status" value="1"/>
</dbReference>
<dbReference type="InterPro" id="IPR001128">
    <property type="entry name" value="Cyt_P450"/>
</dbReference>
<dbReference type="InterPro" id="IPR017972">
    <property type="entry name" value="Cyt_P450_CS"/>
</dbReference>
<dbReference type="InterPro" id="IPR002401">
    <property type="entry name" value="Cyt_P450_E_grp-I"/>
</dbReference>
<dbReference type="InterPro" id="IPR036396">
    <property type="entry name" value="Cyt_P450_sf"/>
</dbReference>
<dbReference type="PANTHER" id="PTHR47955:SF15">
    <property type="entry name" value="CYTOCHROME P450 71A2-LIKE"/>
    <property type="match status" value="1"/>
</dbReference>
<dbReference type="PANTHER" id="PTHR47955">
    <property type="entry name" value="CYTOCHROME P450 FAMILY 71 PROTEIN"/>
    <property type="match status" value="1"/>
</dbReference>
<dbReference type="Pfam" id="PF00067">
    <property type="entry name" value="p450"/>
    <property type="match status" value="1"/>
</dbReference>
<dbReference type="PRINTS" id="PR00463">
    <property type="entry name" value="EP450I"/>
</dbReference>
<dbReference type="PRINTS" id="PR00385">
    <property type="entry name" value="P450"/>
</dbReference>
<dbReference type="SUPFAM" id="SSF48264">
    <property type="entry name" value="Cytochrome P450"/>
    <property type="match status" value="1"/>
</dbReference>
<dbReference type="PROSITE" id="PS00086">
    <property type="entry name" value="CYTOCHROME_P450"/>
    <property type="match status" value="1"/>
</dbReference>
<accession>Q9STL1</accession>
<sequence length="490" mass="55999">MESMIRIILLSLIIFITILFFIKQKKGKKSNTPASPPRLPLIGNLHQLGRHPHRSLCSLSNRYGPLMLLRFGLVPVLVVSSADVARDILKTYDRVFASRPRSKIFEKIFYEARDVALAPYGEYWRQMKSVCVLHLLTNKMVRSFRNVRQEEISLMMEKIQKSSSLQVNLSELLGSLTNDVISRVALGRKYSDETDFKELMKRLTKLLGEFCVGTYVPWLAWIDWISGLDGQLKKTGNDLDEFLEKVVQDHEDGDAQRTDFVDVLLRIQREKSVGFEIDRLSIKAIILDVVVGGTDTSYALMEWAMTELLHRPECLNRLQEEVRTICKGNSSVSEDDIKDMNYLKAVIKETMRLHPPLPLMVPHESTQDVRLGDYHIPAGTQVMINAWAIGREAATWGPDAEKFRPERHLNSSVDFRGHNFELIPFGAGRRICPAISFAVILIEVTLANLVHRYDWRLPEEYIEDQTNVAESTGMVIHRLFPLYAIVSSTT</sequence>
<reference key="1">
    <citation type="journal article" date="2000" name="Nature">
        <title>Sequence and analysis of chromosome 3 of the plant Arabidopsis thaliana.</title>
        <authorList>
            <person name="Salanoubat M."/>
            <person name="Lemcke K."/>
            <person name="Rieger M."/>
            <person name="Ansorge W."/>
            <person name="Unseld M."/>
            <person name="Fartmann B."/>
            <person name="Valle G."/>
            <person name="Bloecker H."/>
            <person name="Perez-Alonso M."/>
            <person name="Obermaier B."/>
            <person name="Delseny M."/>
            <person name="Boutry M."/>
            <person name="Grivell L.A."/>
            <person name="Mache R."/>
            <person name="Puigdomenech P."/>
            <person name="De Simone V."/>
            <person name="Choisne N."/>
            <person name="Artiguenave F."/>
            <person name="Robert C."/>
            <person name="Brottier P."/>
            <person name="Wincker P."/>
            <person name="Cattolico L."/>
            <person name="Weissenbach J."/>
            <person name="Saurin W."/>
            <person name="Quetier F."/>
            <person name="Schaefer M."/>
            <person name="Mueller-Auer S."/>
            <person name="Gabel C."/>
            <person name="Fuchs M."/>
            <person name="Benes V."/>
            <person name="Wurmbach E."/>
            <person name="Drzonek H."/>
            <person name="Erfle H."/>
            <person name="Jordan N."/>
            <person name="Bangert S."/>
            <person name="Wiedelmann R."/>
            <person name="Kranz H."/>
            <person name="Voss H."/>
            <person name="Holland R."/>
            <person name="Brandt P."/>
            <person name="Nyakatura G."/>
            <person name="Vezzi A."/>
            <person name="D'Angelo M."/>
            <person name="Pallavicini A."/>
            <person name="Toppo S."/>
            <person name="Simionati B."/>
            <person name="Conrad A."/>
            <person name="Hornischer K."/>
            <person name="Kauer G."/>
            <person name="Loehnert T.-H."/>
            <person name="Nordsiek G."/>
            <person name="Reichelt J."/>
            <person name="Scharfe M."/>
            <person name="Schoen O."/>
            <person name="Bargues M."/>
            <person name="Terol J."/>
            <person name="Climent J."/>
            <person name="Navarro P."/>
            <person name="Collado C."/>
            <person name="Perez-Perez A."/>
            <person name="Ottenwaelder B."/>
            <person name="Duchemin D."/>
            <person name="Cooke R."/>
            <person name="Laudie M."/>
            <person name="Berger-Llauro C."/>
            <person name="Purnelle B."/>
            <person name="Masuy D."/>
            <person name="de Haan M."/>
            <person name="Maarse A.C."/>
            <person name="Alcaraz J.-P."/>
            <person name="Cottet A."/>
            <person name="Casacuberta E."/>
            <person name="Monfort A."/>
            <person name="Argiriou A."/>
            <person name="Flores M."/>
            <person name="Liguori R."/>
            <person name="Vitale D."/>
            <person name="Mannhaupt G."/>
            <person name="Haase D."/>
            <person name="Schoof H."/>
            <person name="Rudd S."/>
            <person name="Zaccaria P."/>
            <person name="Mewes H.-W."/>
            <person name="Mayer K.F.X."/>
            <person name="Kaul S."/>
            <person name="Town C.D."/>
            <person name="Koo H.L."/>
            <person name="Tallon L.J."/>
            <person name="Jenkins J."/>
            <person name="Rooney T."/>
            <person name="Rizzo M."/>
            <person name="Walts A."/>
            <person name="Utterback T."/>
            <person name="Fujii C.Y."/>
            <person name="Shea T.P."/>
            <person name="Creasy T.H."/>
            <person name="Haas B."/>
            <person name="Maiti R."/>
            <person name="Wu D."/>
            <person name="Peterson J."/>
            <person name="Van Aken S."/>
            <person name="Pai G."/>
            <person name="Militscher J."/>
            <person name="Sellers P."/>
            <person name="Gill J.E."/>
            <person name="Feldblyum T.V."/>
            <person name="Preuss D."/>
            <person name="Lin X."/>
            <person name="Nierman W.C."/>
            <person name="Salzberg S.L."/>
            <person name="White O."/>
            <person name="Venter J.C."/>
            <person name="Fraser C.M."/>
            <person name="Kaneko T."/>
            <person name="Nakamura Y."/>
            <person name="Sato S."/>
            <person name="Kato T."/>
            <person name="Asamizu E."/>
            <person name="Sasamoto S."/>
            <person name="Kimura T."/>
            <person name="Idesawa K."/>
            <person name="Kawashima K."/>
            <person name="Kishida Y."/>
            <person name="Kiyokawa C."/>
            <person name="Kohara M."/>
            <person name="Matsumoto M."/>
            <person name="Matsuno A."/>
            <person name="Muraki A."/>
            <person name="Nakayama S."/>
            <person name="Nakazaki N."/>
            <person name="Shinpo S."/>
            <person name="Takeuchi C."/>
            <person name="Wada T."/>
            <person name="Watanabe A."/>
            <person name="Yamada M."/>
            <person name="Yasuda M."/>
            <person name="Tabata S."/>
        </authorList>
    </citation>
    <scope>NUCLEOTIDE SEQUENCE [LARGE SCALE GENOMIC DNA]</scope>
    <source>
        <strain>cv. Columbia</strain>
    </source>
</reference>
<reference key="2">
    <citation type="journal article" date="2017" name="Plant J.">
        <title>Araport11: a complete reannotation of the Arabidopsis thaliana reference genome.</title>
        <authorList>
            <person name="Cheng C.Y."/>
            <person name="Krishnakumar V."/>
            <person name="Chan A.P."/>
            <person name="Thibaud-Nissen F."/>
            <person name="Schobel S."/>
            <person name="Town C.D."/>
        </authorList>
    </citation>
    <scope>GENOME REANNOTATION</scope>
    <source>
        <strain>cv. Columbia</strain>
    </source>
</reference>
<reference key="3">
    <citation type="journal article" date="2003" name="Science">
        <title>Empirical analysis of transcriptional activity in the Arabidopsis genome.</title>
        <authorList>
            <person name="Yamada K."/>
            <person name="Lim J."/>
            <person name="Dale J.M."/>
            <person name="Chen H."/>
            <person name="Shinn P."/>
            <person name="Palm C.J."/>
            <person name="Southwick A.M."/>
            <person name="Wu H.C."/>
            <person name="Kim C.J."/>
            <person name="Nguyen M."/>
            <person name="Pham P.K."/>
            <person name="Cheuk R.F."/>
            <person name="Karlin-Newmann G."/>
            <person name="Liu S.X."/>
            <person name="Lam B."/>
            <person name="Sakano H."/>
            <person name="Wu T."/>
            <person name="Yu G."/>
            <person name="Miranda M."/>
            <person name="Quach H.L."/>
            <person name="Tripp M."/>
            <person name="Chang C.H."/>
            <person name="Lee J.M."/>
            <person name="Toriumi M.J."/>
            <person name="Chan M.M."/>
            <person name="Tang C.C."/>
            <person name="Onodera C.S."/>
            <person name="Deng J.M."/>
            <person name="Akiyama K."/>
            <person name="Ansari Y."/>
            <person name="Arakawa T."/>
            <person name="Banh J."/>
            <person name="Banno F."/>
            <person name="Bowser L."/>
            <person name="Brooks S.Y."/>
            <person name="Carninci P."/>
            <person name="Chao Q."/>
            <person name="Choy N."/>
            <person name="Enju A."/>
            <person name="Goldsmith A.D."/>
            <person name="Gurjal M."/>
            <person name="Hansen N.F."/>
            <person name="Hayashizaki Y."/>
            <person name="Johnson-Hopson C."/>
            <person name="Hsuan V.W."/>
            <person name="Iida K."/>
            <person name="Karnes M."/>
            <person name="Khan S."/>
            <person name="Koesema E."/>
            <person name="Ishida J."/>
            <person name="Jiang P.X."/>
            <person name="Jones T."/>
            <person name="Kawai J."/>
            <person name="Kamiya A."/>
            <person name="Meyers C."/>
            <person name="Nakajima M."/>
            <person name="Narusaka M."/>
            <person name="Seki M."/>
            <person name="Sakurai T."/>
            <person name="Satou M."/>
            <person name="Tamse R."/>
            <person name="Vaysberg M."/>
            <person name="Wallender E.K."/>
            <person name="Wong C."/>
            <person name="Yamamura Y."/>
            <person name="Yuan S."/>
            <person name="Shinozaki K."/>
            <person name="Davis R.W."/>
            <person name="Theologis A."/>
            <person name="Ecker J.R."/>
        </authorList>
    </citation>
    <scope>NUCLEOTIDE SEQUENCE [LARGE SCALE MRNA]</scope>
    <source>
        <strain>cv. Columbia</strain>
    </source>
</reference>
<proteinExistence type="evidence at transcript level"/>
<feature type="chain" id="PRO_0000052072" description="Cytochrome P450 71A22">
    <location>
        <begin position="1"/>
        <end position="490"/>
    </location>
</feature>
<feature type="transmembrane region" description="Helical" evidence="2">
    <location>
        <begin position="2"/>
        <end position="22"/>
    </location>
</feature>
<feature type="binding site" description="axial binding residue" evidence="1">
    <location>
        <position position="432"/>
    </location>
    <ligand>
        <name>heme</name>
        <dbReference type="ChEBI" id="CHEBI:30413"/>
    </ligand>
    <ligandPart>
        <name>Fe</name>
        <dbReference type="ChEBI" id="CHEBI:18248"/>
    </ligandPart>
</feature>
<name>C71AM_ARATH</name>
<comment type="cofactor">
    <cofactor evidence="1">
        <name>heme</name>
        <dbReference type="ChEBI" id="CHEBI:30413"/>
    </cofactor>
</comment>
<comment type="subcellular location">
    <subcellularLocation>
        <location evidence="3">Membrane</location>
        <topology evidence="3">Single-pass membrane protein</topology>
    </subcellularLocation>
</comment>
<comment type="similarity">
    <text evidence="3">Belongs to the cytochrome P450 family.</text>
</comment>
<gene>
    <name type="primary">CYP71A22</name>
    <name type="ordered locus">At3g48310</name>
    <name type="ORF">T29H11_170</name>
</gene>
<evidence type="ECO:0000250" key="1"/>
<evidence type="ECO:0000255" key="2"/>
<evidence type="ECO:0000305" key="3"/>
<keyword id="KW-0349">Heme</keyword>
<keyword id="KW-0408">Iron</keyword>
<keyword id="KW-0472">Membrane</keyword>
<keyword id="KW-0479">Metal-binding</keyword>
<keyword id="KW-0503">Monooxygenase</keyword>
<keyword id="KW-0560">Oxidoreductase</keyword>
<keyword id="KW-1185">Reference proteome</keyword>
<keyword id="KW-0812">Transmembrane</keyword>
<keyword id="KW-1133">Transmembrane helix</keyword>
<protein>
    <recommendedName>
        <fullName>Cytochrome P450 71A22</fullName>
        <ecNumber>1.14.-.-</ecNumber>
    </recommendedName>
</protein>